<comment type="function">
    <text evidence="1">Negative regulator of class I heat shock genes (grpE-dnaK-dnaJ and groELS operons). Prevents heat-shock induction of these operons.</text>
</comment>
<comment type="similarity">
    <text evidence="1">Belongs to the HrcA family.</text>
</comment>
<protein>
    <recommendedName>
        <fullName evidence="1">Heat-inducible transcription repressor HrcA</fullName>
    </recommendedName>
</protein>
<proteinExistence type="inferred from homology"/>
<organism>
    <name type="scientific">Lachnoclostridium phytofermentans (strain ATCC 700394 / DSM 18823 / ISDg)</name>
    <name type="common">Clostridium phytofermentans</name>
    <dbReference type="NCBI Taxonomy" id="357809"/>
    <lineage>
        <taxon>Bacteria</taxon>
        <taxon>Bacillati</taxon>
        <taxon>Bacillota</taxon>
        <taxon>Clostridia</taxon>
        <taxon>Lachnospirales</taxon>
        <taxon>Lachnospiraceae</taxon>
    </lineage>
</organism>
<reference key="1">
    <citation type="submission" date="2007-11" db="EMBL/GenBank/DDBJ databases">
        <title>Complete genome sequence of Clostridium phytofermentans ISDg.</title>
        <authorList>
            <person name="Leschine S.B."/>
            <person name="Warnick T.A."/>
            <person name="Blanchard J.L."/>
            <person name="Schnell D.J."/>
            <person name="Petit E.L."/>
            <person name="LaTouf W.G."/>
            <person name="Copeland A."/>
            <person name="Lucas S."/>
            <person name="Lapidus A."/>
            <person name="Barry K."/>
            <person name="Glavina del Rio T."/>
            <person name="Dalin E."/>
            <person name="Tice H."/>
            <person name="Pitluck S."/>
            <person name="Kiss H."/>
            <person name="Brettin T."/>
            <person name="Bruce D."/>
            <person name="Detter J.C."/>
            <person name="Han C."/>
            <person name="Kuske C."/>
            <person name="Schmutz J."/>
            <person name="Larimer F."/>
            <person name="Land M."/>
            <person name="Hauser L."/>
            <person name="Kyrpides N."/>
            <person name="Kim E.A."/>
            <person name="Richardson P."/>
        </authorList>
    </citation>
    <scope>NUCLEOTIDE SEQUENCE [LARGE SCALE GENOMIC DNA]</scope>
    <source>
        <strain>ATCC 700394 / DSM 18823 / ISDg</strain>
    </source>
</reference>
<dbReference type="EMBL" id="CP000885">
    <property type="protein sequence ID" value="ABX42674.1"/>
    <property type="molecule type" value="Genomic_DNA"/>
</dbReference>
<dbReference type="RefSeq" id="WP_012200328.1">
    <property type="nucleotide sequence ID" value="NC_010001.1"/>
</dbReference>
<dbReference type="SMR" id="A9KKU2"/>
<dbReference type="STRING" id="357809.Cphy_2313"/>
<dbReference type="KEGG" id="cpy:Cphy_2313"/>
<dbReference type="eggNOG" id="COG1420">
    <property type="taxonomic scope" value="Bacteria"/>
</dbReference>
<dbReference type="HOGENOM" id="CLU_050019_1_0_9"/>
<dbReference type="OrthoDB" id="9783139at2"/>
<dbReference type="Proteomes" id="UP000000370">
    <property type="component" value="Chromosome"/>
</dbReference>
<dbReference type="GO" id="GO:0003677">
    <property type="term" value="F:DNA binding"/>
    <property type="evidence" value="ECO:0007669"/>
    <property type="project" value="InterPro"/>
</dbReference>
<dbReference type="GO" id="GO:0045892">
    <property type="term" value="P:negative regulation of DNA-templated transcription"/>
    <property type="evidence" value="ECO:0007669"/>
    <property type="project" value="UniProtKB-UniRule"/>
</dbReference>
<dbReference type="Gene3D" id="3.30.450.40">
    <property type="match status" value="1"/>
</dbReference>
<dbReference type="Gene3D" id="3.30.390.60">
    <property type="entry name" value="Heat-inducible transcription repressor hrca homolog, domain 3"/>
    <property type="match status" value="1"/>
</dbReference>
<dbReference type="Gene3D" id="1.10.10.10">
    <property type="entry name" value="Winged helix-like DNA-binding domain superfamily/Winged helix DNA-binding domain"/>
    <property type="match status" value="1"/>
</dbReference>
<dbReference type="HAMAP" id="MF_00081">
    <property type="entry name" value="HrcA"/>
    <property type="match status" value="1"/>
</dbReference>
<dbReference type="InterPro" id="IPR029016">
    <property type="entry name" value="GAF-like_dom_sf"/>
</dbReference>
<dbReference type="InterPro" id="IPR002571">
    <property type="entry name" value="HrcA"/>
</dbReference>
<dbReference type="InterPro" id="IPR021153">
    <property type="entry name" value="HrcA_C"/>
</dbReference>
<dbReference type="InterPro" id="IPR036388">
    <property type="entry name" value="WH-like_DNA-bd_sf"/>
</dbReference>
<dbReference type="InterPro" id="IPR036390">
    <property type="entry name" value="WH_DNA-bd_sf"/>
</dbReference>
<dbReference type="InterPro" id="IPR023120">
    <property type="entry name" value="WHTH_transcript_rep_HrcA_IDD"/>
</dbReference>
<dbReference type="NCBIfam" id="TIGR00331">
    <property type="entry name" value="hrcA"/>
    <property type="match status" value="1"/>
</dbReference>
<dbReference type="PANTHER" id="PTHR34824">
    <property type="entry name" value="HEAT-INDUCIBLE TRANSCRIPTION REPRESSOR HRCA"/>
    <property type="match status" value="1"/>
</dbReference>
<dbReference type="PANTHER" id="PTHR34824:SF1">
    <property type="entry name" value="HEAT-INDUCIBLE TRANSCRIPTION REPRESSOR HRCA"/>
    <property type="match status" value="1"/>
</dbReference>
<dbReference type="Pfam" id="PF01628">
    <property type="entry name" value="HrcA"/>
    <property type="match status" value="1"/>
</dbReference>
<dbReference type="PIRSF" id="PIRSF005485">
    <property type="entry name" value="HrcA"/>
    <property type="match status" value="1"/>
</dbReference>
<dbReference type="SUPFAM" id="SSF55781">
    <property type="entry name" value="GAF domain-like"/>
    <property type="match status" value="1"/>
</dbReference>
<dbReference type="SUPFAM" id="SSF46785">
    <property type="entry name" value="Winged helix' DNA-binding domain"/>
    <property type="match status" value="1"/>
</dbReference>
<name>HRCA_LACP7</name>
<keyword id="KW-1185">Reference proteome</keyword>
<keyword id="KW-0678">Repressor</keyword>
<keyword id="KW-0346">Stress response</keyword>
<keyword id="KW-0804">Transcription</keyword>
<keyword id="KW-0805">Transcription regulation</keyword>
<feature type="chain" id="PRO_1000075286" description="Heat-inducible transcription repressor HrcA">
    <location>
        <begin position="1"/>
        <end position="345"/>
    </location>
</feature>
<gene>
    <name evidence="1" type="primary">hrcA</name>
    <name type="ordered locus">Cphy_2313</name>
</gene>
<accession>A9KKU2</accession>
<sequence>MQLDDRKLKILQAIIRNYLETGEPVGSRTISKYTDLNLSSATIRNEMSDLEELGYIIQPHTSAGRIPSDKGYRLYVDTMMEDKVTEVENMRDMLLEKADKMETLLQQVARLLAVNTNYATMVTSPQYRSRKVKFLQVSEVDTTQILTIIVLEGNIVKNKIIAIAEPLDKETLLKLNIVLNTFLQGLDLSEINLALIRQMKEQAAEHSSVVSDILDAVAQAISEEDDIQIFTSGATNILKYPELNDMEKASELLYTLEEKKQLTNLMNNEVSSGENRGIQVYIGNETPVDSMKDCAVVTATYQIEEGVYGKIGIIGPKRMDYEKVVSTLQNLMCQLDDIFKKDNDR</sequence>
<evidence type="ECO:0000255" key="1">
    <source>
        <dbReference type="HAMAP-Rule" id="MF_00081"/>
    </source>
</evidence>